<name>KLC_DROME</name>
<organism>
    <name type="scientific">Drosophila melanogaster</name>
    <name type="common">Fruit fly</name>
    <dbReference type="NCBI Taxonomy" id="7227"/>
    <lineage>
        <taxon>Eukaryota</taxon>
        <taxon>Metazoa</taxon>
        <taxon>Ecdysozoa</taxon>
        <taxon>Arthropoda</taxon>
        <taxon>Hexapoda</taxon>
        <taxon>Insecta</taxon>
        <taxon>Pterygota</taxon>
        <taxon>Neoptera</taxon>
        <taxon>Endopterygota</taxon>
        <taxon>Diptera</taxon>
        <taxon>Brachycera</taxon>
        <taxon>Muscomorpha</taxon>
        <taxon>Ephydroidea</taxon>
        <taxon>Drosophilidae</taxon>
        <taxon>Drosophila</taxon>
        <taxon>Sophophora</taxon>
    </lineage>
</organism>
<proteinExistence type="evidence at protein level"/>
<dbReference type="EMBL" id="L11013">
    <property type="protein sequence ID" value="AAA02481.1"/>
    <property type="molecule type" value="mRNA"/>
</dbReference>
<dbReference type="EMBL" id="L11328">
    <property type="protein sequence ID" value="AAA28669.1"/>
    <property type="molecule type" value="mRNA"/>
</dbReference>
<dbReference type="EMBL" id="AE014296">
    <property type="protein sequence ID" value="AAF49890.2"/>
    <property type="molecule type" value="Genomic_DNA"/>
</dbReference>
<dbReference type="EMBL" id="AY061164">
    <property type="protein sequence ID" value="AAL28712.1"/>
    <property type="molecule type" value="mRNA"/>
</dbReference>
<dbReference type="RefSeq" id="NP_001261780.1">
    <property type="nucleotide sequence ID" value="NM_001274851.1"/>
</dbReference>
<dbReference type="RefSeq" id="NP_524049.1">
    <property type="nucleotide sequence ID" value="NM_079325.3"/>
</dbReference>
<dbReference type="SMR" id="P46824"/>
<dbReference type="BioGRID" id="64793">
    <property type="interactions" value="68"/>
</dbReference>
<dbReference type="DIP" id="DIP-19091N"/>
<dbReference type="FunCoup" id="P46824">
    <property type="interactions" value="642"/>
</dbReference>
<dbReference type="IntAct" id="P46824">
    <property type="interactions" value="34"/>
</dbReference>
<dbReference type="STRING" id="7227.FBpp0075683"/>
<dbReference type="GlyGen" id="P46824">
    <property type="glycosylation" value="1 site"/>
</dbReference>
<dbReference type="iPTMnet" id="P46824"/>
<dbReference type="PaxDb" id="7227-FBpp0075683"/>
<dbReference type="EnsemblMetazoa" id="FBtr0075951">
    <property type="protein sequence ID" value="FBpp0075683"/>
    <property type="gene ID" value="FBgn0010235"/>
</dbReference>
<dbReference type="EnsemblMetazoa" id="FBtr0331555">
    <property type="protein sequence ID" value="FBpp0303945"/>
    <property type="gene ID" value="FBgn0010235"/>
</dbReference>
<dbReference type="GeneID" id="39445"/>
<dbReference type="KEGG" id="dme:Dmel_CG5433"/>
<dbReference type="AGR" id="FB:FBgn0010235"/>
<dbReference type="CTD" id="39445"/>
<dbReference type="FlyBase" id="FBgn0010235">
    <property type="gene designation" value="Klc"/>
</dbReference>
<dbReference type="VEuPathDB" id="VectorBase:FBgn0010235"/>
<dbReference type="eggNOG" id="KOG1840">
    <property type="taxonomic scope" value="Eukaryota"/>
</dbReference>
<dbReference type="GeneTree" id="ENSGT00940000155555"/>
<dbReference type="InParanoid" id="P46824"/>
<dbReference type="OMA" id="AGHMETI"/>
<dbReference type="OrthoDB" id="413723at2759"/>
<dbReference type="PhylomeDB" id="P46824"/>
<dbReference type="Reactome" id="R-DME-6811434">
    <property type="pathway name" value="COPI-dependent Golgi-to-ER retrograde traffic"/>
</dbReference>
<dbReference type="Reactome" id="R-DME-983189">
    <property type="pathway name" value="Kinesins"/>
</dbReference>
<dbReference type="BioGRID-ORCS" id="39445">
    <property type="hits" value="0 hits in 3 CRISPR screens"/>
</dbReference>
<dbReference type="GenomeRNAi" id="39445"/>
<dbReference type="PRO" id="PR:P46824"/>
<dbReference type="Proteomes" id="UP000000803">
    <property type="component" value="Chromosome 3L"/>
</dbReference>
<dbReference type="Bgee" id="FBgn0010235">
    <property type="expression patterns" value="Expressed in embryonic/larval hemocyte (Drosophila) and 197 other cell types or tissues"/>
</dbReference>
<dbReference type="ExpressionAtlas" id="P46824">
    <property type="expression patterns" value="baseline and differential"/>
</dbReference>
<dbReference type="GO" id="GO:0005737">
    <property type="term" value="C:cytoplasm"/>
    <property type="evidence" value="ECO:0000318"/>
    <property type="project" value="GO_Central"/>
</dbReference>
<dbReference type="GO" id="GO:0005871">
    <property type="term" value="C:kinesin complex"/>
    <property type="evidence" value="ECO:0007669"/>
    <property type="project" value="InterPro"/>
</dbReference>
<dbReference type="GO" id="GO:0005874">
    <property type="term" value="C:microtubule"/>
    <property type="evidence" value="ECO:0007669"/>
    <property type="project" value="UniProtKB-KW"/>
</dbReference>
<dbReference type="GO" id="GO:0019894">
    <property type="term" value="F:kinesin binding"/>
    <property type="evidence" value="ECO:0000318"/>
    <property type="project" value="GO_Central"/>
</dbReference>
<dbReference type="GO" id="GO:0046843">
    <property type="term" value="P:dorsal appendage formation"/>
    <property type="evidence" value="ECO:0000315"/>
    <property type="project" value="FlyBase"/>
</dbReference>
<dbReference type="GO" id="GO:0007018">
    <property type="term" value="P:microtubule-based movement"/>
    <property type="evidence" value="ECO:0000314"/>
    <property type="project" value="FlyBase"/>
</dbReference>
<dbReference type="FunFam" id="1.25.40.10:FF:000003">
    <property type="entry name" value="kinesin light chain isoform X1"/>
    <property type="match status" value="1"/>
</dbReference>
<dbReference type="Gene3D" id="1.25.40.10">
    <property type="entry name" value="Tetratricopeptide repeat domain"/>
    <property type="match status" value="1"/>
</dbReference>
<dbReference type="InterPro" id="IPR002151">
    <property type="entry name" value="Kinesin_light"/>
</dbReference>
<dbReference type="InterPro" id="IPR015792">
    <property type="entry name" value="Kinesin_light_repeat"/>
</dbReference>
<dbReference type="InterPro" id="IPR011990">
    <property type="entry name" value="TPR-like_helical_dom_sf"/>
</dbReference>
<dbReference type="InterPro" id="IPR019734">
    <property type="entry name" value="TPR_rpt"/>
</dbReference>
<dbReference type="PANTHER" id="PTHR45783">
    <property type="entry name" value="KINESIN LIGHT CHAIN"/>
    <property type="match status" value="1"/>
</dbReference>
<dbReference type="PANTHER" id="PTHR45783:SF3">
    <property type="entry name" value="KINESIN LIGHT CHAIN"/>
    <property type="match status" value="1"/>
</dbReference>
<dbReference type="Pfam" id="PF13374">
    <property type="entry name" value="TPR_10"/>
    <property type="match status" value="1"/>
</dbReference>
<dbReference type="Pfam" id="PF13424">
    <property type="entry name" value="TPR_12"/>
    <property type="match status" value="2"/>
</dbReference>
<dbReference type="PRINTS" id="PR00381">
    <property type="entry name" value="KINESINLIGHT"/>
</dbReference>
<dbReference type="SMART" id="SM00028">
    <property type="entry name" value="TPR"/>
    <property type="match status" value="5"/>
</dbReference>
<dbReference type="SUPFAM" id="SSF48452">
    <property type="entry name" value="TPR-like"/>
    <property type="match status" value="2"/>
</dbReference>
<dbReference type="PROSITE" id="PS01160">
    <property type="entry name" value="KINESIN_LIGHT"/>
    <property type="match status" value="4"/>
</dbReference>
<dbReference type="PROSITE" id="PS50005">
    <property type="entry name" value="TPR"/>
    <property type="match status" value="6"/>
</dbReference>
<dbReference type="PROSITE" id="PS50293">
    <property type="entry name" value="TPR_REGION"/>
    <property type="match status" value="1"/>
</dbReference>
<feature type="chain" id="PRO_0000215102" description="Kinesin light chain">
    <location>
        <begin position="1"/>
        <end position="508"/>
    </location>
</feature>
<feature type="repeat" description="TPR 1">
    <location>
        <begin position="186"/>
        <end position="219"/>
    </location>
</feature>
<feature type="repeat" description="TPR 2">
    <location>
        <begin position="228"/>
        <end position="261"/>
    </location>
</feature>
<feature type="repeat" description="TPR 3">
    <location>
        <begin position="270"/>
        <end position="303"/>
    </location>
</feature>
<feature type="repeat" description="TPR 4">
    <location>
        <begin position="312"/>
        <end position="345"/>
    </location>
</feature>
<feature type="repeat" description="TPR 5">
    <location>
        <begin position="354"/>
        <end position="387"/>
    </location>
</feature>
<feature type="repeat" description="TPR 6">
    <location>
        <begin position="437"/>
        <end position="470"/>
    </location>
</feature>
<feature type="region of interest" description="Disordered" evidence="1">
    <location>
        <begin position="156"/>
        <end position="175"/>
    </location>
</feature>
<feature type="region of interest" description="Disordered" evidence="1">
    <location>
        <begin position="484"/>
        <end position="508"/>
    </location>
</feature>
<feature type="coiled-coil region">
    <location>
        <begin position="34"/>
        <end position="129"/>
    </location>
</feature>
<feature type="compositionally biased region" description="Basic and acidic residues" evidence="1">
    <location>
        <begin position="493"/>
        <end position="508"/>
    </location>
</feature>
<feature type="modified residue" description="Phosphothreonine" evidence="2">
    <location>
        <position position="168"/>
    </location>
</feature>
<feature type="modified residue" description="Phosphothreonine" evidence="2">
    <location>
        <position position="477"/>
    </location>
</feature>
<feature type="modified residue" description="Phosphoserine" evidence="2">
    <location>
        <position position="480"/>
    </location>
</feature>
<feature type="modified residue" description="Phosphoserine" evidence="2">
    <location>
        <position position="485"/>
    </location>
</feature>
<comment type="function">
    <text>Kinesin is a microtubule-associated force-producing protein that may play a role in organelle transport. The light chain may function in coupling of cargo to the heavy chain or in the modulation of its ATPase activity.</text>
</comment>
<comment type="subunit">
    <text>Oligomeric complex composed of two heavy chains and two light chains.</text>
</comment>
<comment type="interaction">
    <interactant intactId="EBI-77490">
        <id>P46824</id>
    </interactant>
    <interactant intactId="EBI-102445">
        <id>P17210</id>
        <label>Khc</label>
    </interactant>
    <organismsDiffer>false</organismsDiffer>
    <experiments>5</experiments>
</comment>
<comment type="subcellular location">
    <subcellularLocation>
        <location evidence="3">Cytoplasm</location>
        <location evidence="3">Cytoskeleton</location>
    </subcellularLocation>
</comment>
<comment type="tissue specificity">
    <text>Ubiquitous.</text>
</comment>
<comment type="domain">
    <text>The light chain is composed of three structural domains: a large globular N-terminal domain which may be involved in binding to kinesin heavy chains, a central alpha-helical coiled-coil domain that mediates the light chain dimerization; and a small globular C-terminal which may play a role in regulating mechanochemical activity or attachment of kinesin to membrane-bound organelles.</text>
</comment>
<comment type="similarity">
    <text evidence="3">Belongs to the kinesin light chain family.</text>
</comment>
<sequence length="508" mass="58044">MTQMSQDEIITNTKTVLQGLEALRVEHVSIMNGIAEVQKDNEKSDMLRKNIENIELGLSEAQVMMALTSHLQNIEAEKHKLKTQVRRLHQENAWLRDELANTQQKFQASEQLVAQLEEEKKHLEFMASVKKYDENQEQDDACDKSRTDPVVELFPDEENEDRHNMSPTPPSQFANQTSGYEIPARLRTLHNLVIQYASQGRYEVAVPLCKQALEDLERTSGHDHPDVATMLNILALVYRDQNKYKEAANLLNDALSIRGKTLGENHPAVAATLNNLAVLYGKRGKYKDAEPLCKRALEIREKVLGKDHPDVAKQLNNLALLCQNQGKYDEVEKYYQRALDIYESKLGPDDPNVAKTKNNLAGCYLKQGRYTEAEILYKQVLTRAHEREFGAIDSKNKPIWQVAEEREEHKFDNRENTPYGEYGGWHKAAKVDSPTVTTTLKNLGALYRRQGMFEAAETLEDCAMRSKKEAYDLAKQTKLSQLLTSNEKRRSKAIKEDLDFSEEKNAKP</sequence>
<protein>
    <recommendedName>
        <fullName>Kinesin light chain</fullName>
        <shortName>KLC</shortName>
    </recommendedName>
</protein>
<gene>
    <name type="primary">Klc</name>
    <name type="ORF">CG5433</name>
</gene>
<evidence type="ECO:0000256" key="1">
    <source>
        <dbReference type="SAM" id="MobiDB-lite"/>
    </source>
</evidence>
<evidence type="ECO:0000269" key="2">
    <source>
    </source>
</evidence>
<evidence type="ECO:0000305" key="3"/>
<accession>P46824</accession>
<accession>Q9VU05</accession>
<reference key="1">
    <citation type="journal article" date="1993" name="J. Biol. Chem.">
        <title>The Drosophila kinesin light chain. Primary structure and interaction with kinesin heavy chain.</title>
        <authorList>
            <person name="Gauger A.K."/>
            <person name="Goldstein L.S.B."/>
        </authorList>
    </citation>
    <scope>NUCLEOTIDE SEQUENCE [MRNA]</scope>
    <source>
        <tissue>Head</tissue>
    </source>
</reference>
<reference key="2">
    <citation type="journal article" date="2000" name="Science">
        <title>The genome sequence of Drosophila melanogaster.</title>
        <authorList>
            <person name="Adams M.D."/>
            <person name="Celniker S.E."/>
            <person name="Holt R.A."/>
            <person name="Evans C.A."/>
            <person name="Gocayne J.D."/>
            <person name="Amanatides P.G."/>
            <person name="Scherer S.E."/>
            <person name="Li P.W."/>
            <person name="Hoskins R.A."/>
            <person name="Galle R.F."/>
            <person name="George R.A."/>
            <person name="Lewis S.E."/>
            <person name="Richards S."/>
            <person name="Ashburner M."/>
            <person name="Henderson S.N."/>
            <person name="Sutton G.G."/>
            <person name="Wortman J.R."/>
            <person name="Yandell M.D."/>
            <person name="Zhang Q."/>
            <person name="Chen L.X."/>
            <person name="Brandon R.C."/>
            <person name="Rogers Y.-H.C."/>
            <person name="Blazej R.G."/>
            <person name="Champe M."/>
            <person name="Pfeiffer B.D."/>
            <person name="Wan K.H."/>
            <person name="Doyle C."/>
            <person name="Baxter E.G."/>
            <person name="Helt G."/>
            <person name="Nelson C.R."/>
            <person name="Miklos G.L.G."/>
            <person name="Abril J.F."/>
            <person name="Agbayani A."/>
            <person name="An H.-J."/>
            <person name="Andrews-Pfannkoch C."/>
            <person name="Baldwin D."/>
            <person name="Ballew R.M."/>
            <person name="Basu A."/>
            <person name="Baxendale J."/>
            <person name="Bayraktaroglu L."/>
            <person name="Beasley E.M."/>
            <person name="Beeson K.Y."/>
            <person name="Benos P.V."/>
            <person name="Berman B.P."/>
            <person name="Bhandari D."/>
            <person name="Bolshakov S."/>
            <person name="Borkova D."/>
            <person name="Botchan M.R."/>
            <person name="Bouck J."/>
            <person name="Brokstein P."/>
            <person name="Brottier P."/>
            <person name="Burtis K.C."/>
            <person name="Busam D.A."/>
            <person name="Butler H."/>
            <person name="Cadieu E."/>
            <person name="Center A."/>
            <person name="Chandra I."/>
            <person name="Cherry J.M."/>
            <person name="Cawley S."/>
            <person name="Dahlke C."/>
            <person name="Davenport L.B."/>
            <person name="Davies P."/>
            <person name="de Pablos B."/>
            <person name="Delcher A."/>
            <person name="Deng Z."/>
            <person name="Mays A.D."/>
            <person name="Dew I."/>
            <person name="Dietz S.M."/>
            <person name="Dodson K."/>
            <person name="Doup L.E."/>
            <person name="Downes M."/>
            <person name="Dugan-Rocha S."/>
            <person name="Dunkov B.C."/>
            <person name="Dunn P."/>
            <person name="Durbin K.J."/>
            <person name="Evangelista C.C."/>
            <person name="Ferraz C."/>
            <person name="Ferriera S."/>
            <person name="Fleischmann W."/>
            <person name="Fosler C."/>
            <person name="Gabrielian A.E."/>
            <person name="Garg N.S."/>
            <person name="Gelbart W.M."/>
            <person name="Glasser K."/>
            <person name="Glodek A."/>
            <person name="Gong F."/>
            <person name="Gorrell J.H."/>
            <person name="Gu Z."/>
            <person name="Guan P."/>
            <person name="Harris M."/>
            <person name="Harris N.L."/>
            <person name="Harvey D.A."/>
            <person name="Heiman T.J."/>
            <person name="Hernandez J.R."/>
            <person name="Houck J."/>
            <person name="Hostin D."/>
            <person name="Houston K.A."/>
            <person name="Howland T.J."/>
            <person name="Wei M.-H."/>
            <person name="Ibegwam C."/>
            <person name="Jalali M."/>
            <person name="Kalush F."/>
            <person name="Karpen G.H."/>
            <person name="Ke Z."/>
            <person name="Kennison J.A."/>
            <person name="Ketchum K.A."/>
            <person name="Kimmel B.E."/>
            <person name="Kodira C.D."/>
            <person name="Kraft C.L."/>
            <person name="Kravitz S."/>
            <person name="Kulp D."/>
            <person name="Lai Z."/>
            <person name="Lasko P."/>
            <person name="Lei Y."/>
            <person name="Levitsky A.A."/>
            <person name="Li J.H."/>
            <person name="Li Z."/>
            <person name="Liang Y."/>
            <person name="Lin X."/>
            <person name="Liu X."/>
            <person name="Mattei B."/>
            <person name="McIntosh T.C."/>
            <person name="McLeod M.P."/>
            <person name="McPherson D."/>
            <person name="Merkulov G."/>
            <person name="Milshina N.V."/>
            <person name="Mobarry C."/>
            <person name="Morris J."/>
            <person name="Moshrefi A."/>
            <person name="Mount S.M."/>
            <person name="Moy M."/>
            <person name="Murphy B."/>
            <person name="Murphy L."/>
            <person name="Muzny D.M."/>
            <person name="Nelson D.L."/>
            <person name="Nelson D.R."/>
            <person name="Nelson K.A."/>
            <person name="Nixon K."/>
            <person name="Nusskern D.R."/>
            <person name="Pacleb J.M."/>
            <person name="Palazzolo M."/>
            <person name="Pittman G.S."/>
            <person name="Pan S."/>
            <person name="Pollard J."/>
            <person name="Puri V."/>
            <person name="Reese M.G."/>
            <person name="Reinert K."/>
            <person name="Remington K."/>
            <person name="Saunders R.D.C."/>
            <person name="Scheeler F."/>
            <person name="Shen H."/>
            <person name="Shue B.C."/>
            <person name="Siden-Kiamos I."/>
            <person name="Simpson M."/>
            <person name="Skupski M.P."/>
            <person name="Smith T.J."/>
            <person name="Spier E."/>
            <person name="Spradling A.C."/>
            <person name="Stapleton M."/>
            <person name="Strong R."/>
            <person name="Sun E."/>
            <person name="Svirskas R."/>
            <person name="Tector C."/>
            <person name="Turner R."/>
            <person name="Venter E."/>
            <person name="Wang A.H."/>
            <person name="Wang X."/>
            <person name="Wang Z.-Y."/>
            <person name="Wassarman D.A."/>
            <person name="Weinstock G.M."/>
            <person name="Weissenbach J."/>
            <person name="Williams S.M."/>
            <person name="Woodage T."/>
            <person name="Worley K.C."/>
            <person name="Wu D."/>
            <person name="Yang S."/>
            <person name="Yao Q.A."/>
            <person name="Ye J."/>
            <person name="Yeh R.-F."/>
            <person name="Zaveri J.S."/>
            <person name="Zhan M."/>
            <person name="Zhang G."/>
            <person name="Zhao Q."/>
            <person name="Zheng L."/>
            <person name="Zheng X.H."/>
            <person name="Zhong F.N."/>
            <person name="Zhong W."/>
            <person name="Zhou X."/>
            <person name="Zhu S.C."/>
            <person name="Zhu X."/>
            <person name="Smith H.O."/>
            <person name="Gibbs R.A."/>
            <person name="Myers E.W."/>
            <person name="Rubin G.M."/>
            <person name="Venter J.C."/>
        </authorList>
    </citation>
    <scope>NUCLEOTIDE SEQUENCE [LARGE SCALE GENOMIC DNA]</scope>
    <source>
        <strain>Berkeley</strain>
    </source>
</reference>
<reference key="3">
    <citation type="journal article" date="2002" name="Genome Biol.">
        <title>Annotation of the Drosophila melanogaster euchromatic genome: a systematic review.</title>
        <authorList>
            <person name="Misra S."/>
            <person name="Crosby M.A."/>
            <person name="Mungall C.J."/>
            <person name="Matthews B.B."/>
            <person name="Campbell K.S."/>
            <person name="Hradecky P."/>
            <person name="Huang Y."/>
            <person name="Kaminker J.S."/>
            <person name="Millburn G.H."/>
            <person name="Prochnik S.E."/>
            <person name="Smith C.D."/>
            <person name="Tupy J.L."/>
            <person name="Whitfield E.J."/>
            <person name="Bayraktaroglu L."/>
            <person name="Berman B.P."/>
            <person name="Bettencourt B.R."/>
            <person name="Celniker S.E."/>
            <person name="de Grey A.D.N.J."/>
            <person name="Drysdale R.A."/>
            <person name="Harris N.L."/>
            <person name="Richter J."/>
            <person name="Russo S."/>
            <person name="Schroeder A.J."/>
            <person name="Shu S.Q."/>
            <person name="Stapleton M."/>
            <person name="Yamada C."/>
            <person name="Ashburner M."/>
            <person name="Gelbart W.M."/>
            <person name="Rubin G.M."/>
            <person name="Lewis S.E."/>
        </authorList>
    </citation>
    <scope>GENOME REANNOTATION</scope>
    <source>
        <strain>Berkeley</strain>
    </source>
</reference>
<reference key="4">
    <citation type="journal article" date="2002" name="Genome Biol.">
        <title>A Drosophila full-length cDNA resource.</title>
        <authorList>
            <person name="Stapleton M."/>
            <person name="Carlson J.W."/>
            <person name="Brokstein P."/>
            <person name="Yu C."/>
            <person name="Champe M."/>
            <person name="George R.A."/>
            <person name="Guarin H."/>
            <person name="Kronmiller B."/>
            <person name="Pacleb J.M."/>
            <person name="Park S."/>
            <person name="Wan K.H."/>
            <person name="Rubin G.M."/>
            <person name="Celniker S.E."/>
        </authorList>
    </citation>
    <scope>NUCLEOTIDE SEQUENCE [LARGE SCALE MRNA]</scope>
    <source>
        <strain>Berkeley</strain>
        <tissue>Embryo</tissue>
    </source>
</reference>
<reference key="5">
    <citation type="journal article" date="2008" name="J. Proteome Res.">
        <title>Phosphoproteome analysis of Drosophila melanogaster embryos.</title>
        <authorList>
            <person name="Zhai B."/>
            <person name="Villen J."/>
            <person name="Beausoleil S.A."/>
            <person name="Mintseris J."/>
            <person name="Gygi S.P."/>
        </authorList>
    </citation>
    <scope>PHOSPHORYLATION [LARGE SCALE ANALYSIS] AT THR-168; THR-477; SER-480 AND SER-485</scope>
    <scope>IDENTIFICATION BY MASS SPECTROMETRY</scope>
    <source>
        <tissue>Embryo</tissue>
    </source>
</reference>
<keyword id="KW-0175">Coiled coil</keyword>
<keyword id="KW-0963">Cytoplasm</keyword>
<keyword id="KW-0206">Cytoskeleton</keyword>
<keyword id="KW-0493">Microtubule</keyword>
<keyword id="KW-0505">Motor protein</keyword>
<keyword id="KW-0597">Phosphoprotein</keyword>
<keyword id="KW-1185">Reference proteome</keyword>
<keyword id="KW-0677">Repeat</keyword>
<keyword id="KW-0802">TPR repeat</keyword>